<proteinExistence type="inferred from homology"/>
<keyword id="KW-0028">Amino-acid biosynthesis</keyword>
<keyword id="KW-0055">Arginine biosynthesis</keyword>
<keyword id="KW-0963">Cytoplasm</keyword>
<keyword id="KW-0456">Lyase</keyword>
<reference key="1">
    <citation type="submission" date="2009-03" db="EMBL/GenBank/DDBJ databases">
        <title>Complete genome sequence of Edwardsiella ictaluri 93-146.</title>
        <authorList>
            <person name="Williams M.L."/>
            <person name="Gillaspy A.F."/>
            <person name="Dyer D.W."/>
            <person name="Thune R.L."/>
            <person name="Waldbieser G.C."/>
            <person name="Schuster S.C."/>
            <person name="Gipson J."/>
            <person name="Zaitshik J."/>
            <person name="Landry C."/>
            <person name="Lawrence M.L."/>
        </authorList>
    </citation>
    <scope>NUCLEOTIDE SEQUENCE [LARGE SCALE GENOMIC DNA]</scope>
    <source>
        <strain>93-146</strain>
    </source>
</reference>
<dbReference type="EC" id="4.3.2.1" evidence="1"/>
<dbReference type="EMBL" id="CP001600">
    <property type="protein sequence ID" value="ACR70963.1"/>
    <property type="molecule type" value="Genomic_DNA"/>
</dbReference>
<dbReference type="RefSeq" id="WP_015872994.1">
    <property type="nucleotide sequence ID" value="NZ_CP169062.1"/>
</dbReference>
<dbReference type="SMR" id="C5BC57"/>
<dbReference type="STRING" id="67780.B6E78_10785"/>
<dbReference type="GeneID" id="69540668"/>
<dbReference type="KEGG" id="eic:NT01EI_3844"/>
<dbReference type="PATRIC" id="fig|634503.3.peg.3430"/>
<dbReference type="HOGENOM" id="CLU_027272_2_3_6"/>
<dbReference type="OrthoDB" id="9769623at2"/>
<dbReference type="UniPathway" id="UPA00068">
    <property type="reaction ID" value="UER00114"/>
</dbReference>
<dbReference type="Proteomes" id="UP000001485">
    <property type="component" value="Chromosome"/>
</dbReference>
<dbReference type="GO" id="GO:0005829">
    <property type="term" value="C:cytosol"/>
    <property type="evidence" value="ECO:0007669"/>
    <property type="project" value="TreeGrafter"/>
</dbReference>
<dbReference type="GO" id="GO:0004056">
    <property type="term" value="F:argininosuccinate lyase activity"/>
    <property type="evidence" value="ECO:0007669"/>
    <property type="project" value="UniProtKB-UniRule"/>
</dbReference>
<dbReference type="GO" id="GO:0042450">
    <property type="term" value="P:arginine biosynthetic process via ornithine"/>
    <property type="evidence" value="ECO:0007669"/>
    <property type="project" value="InterPro"/>
</dbReference>
<dbReference type="GO" id="GO:0006526">
    <property type="term" value="P:L-arginine biosynthetic process"/>
    <property type="evidence" value="ECO:0007669"/>
    <property type="project" value="UniProtKB-UniRule"/>
</dbReference>
<dbReference type="CDD" id="cd01359">
    <property type="entry name" value="Argininosuccinate_lyase"/>
    <property type="match status" value="1"/>
</dbReference>
<dbReference type="FunFam" id="1.10.40.30:FF:000001">
    <property type="entry name" value="Argininosuccinate lyase"/>
    <property type="match status" value="1"/>
</dbReference>
<dbReference type="FunFam" id="1.20.200.10:FF:000006">
    <property type="entry name" value="Argininosuccinate lyase"/>
    <property type="match status" value="1"/>
</dbReference>
<dbReference type="Gene3D" id="1.10.40.30">
    <property type="entry name" value="Fumarase/aspartase (C-terminal domain)"/>
    <property type="match status" value="1"/>
</dbReference>
<dbReference type="Gene3D" id="1.20.200.10">
    <property type="entry name" value="Fumarase/aspartase (Central domain)"/>
    <property type="match status" value="1"/>
</dbReference>
<dbReference type="Gene3D" id="1.10.275.10">
    <property type="entry name" value="Fumarase/aspartase (N-terminal domain)"/>
    <property type="match status" value="1"/>
</dbReference>
<dbReference type="HAMAP" id="MF_00006">
    <property type="entry name" value="Arg_succ_lyase"/>
    <property type="match status" value="1"/>
</dbReference>
<dbReference type="InterPro" id="IPR029419">
    <property type="entry name" value="Arg_succ_lyase_C"/>
</dbReference>
<dbReference type="InterPro" id="IPR009049">
    <property type="entry name" value="Argininosuccinate_lyase"/>
</dbReference>
<dbReference type="InterPro" id="IPR024083">
    <property type="entry name" value="Fumarase/histidase_N"/>
</dbReference>
<dbReference type="InterPro" id="IPR020557">
    <property type="entry name" value="Fumarate_lyase_CS"/>
</dbReference>
<dbReference type="InterPro" id="IPR000362">
    <property type="entry name" value="Fumarate_lyase_fam"/>
</dbReference>
<dbReference type="InterPro" id="IPR022761">
    <property type="entry name" value="Fumarate_lyase_N"/>
</dbReference>
<dbReference type="InterPro" id="IPR008948">
    <property type="entry name" value="L-Aspartase-like"/>
</dbReference>
<dbReference type="NCBIfam" id="TIGR00838">
    <property type="entry name" value="argH"/>
    <property type="match status" value="1"/>
</dbReference>
<dbReference type="NCBIfam" id="NF008964">
    <property type="entry name" value="PRK12308.1"/>
    <property type="match status" value="1"/>
</dbReference>
<dbReference type="PANTHER" id="PTHR43814">
    <property type="entry name" value="ARGININOSUCCINATE LYASE"/>
    <property type="match status" value="1"/>
</dbReference>
<dbReference type="PANTHER" id="PTHR43814:SF1">
    <property type="entry name" value="ARGININOSUCCINATE LYASE"/>
    <property type="match status" value="1"/>
</dbReference>
<dbReference type="Pfam" id="PF14698">
    <property type="entry name" value="ASL_C2"/>
    <property type="match status" value="1"/>
</dbReference>
<dbReference type="Pfam" id="PF00206">
    <property type="entry name" value="Lyase_1"/>
    <property type="match status" value="1"/>
</dbReference>
<dbReference type="PRINTS" id="PR00145">
    <property type="entry name" value="ARGSUCLYASE"/>
</dbReference>
<dbReference type="PRINTS" id="PR00149">
    <property type="entry name" value="FUMRATELYASE"/>
</dbReference>
<dbReference type="SUPFAM" id="SSF48557">
    <property type="entry name" value="L-aspartase-like"/>
    <property type="match status" value="1"/>
</dbReference>
<dbReference type="PROSITE" id="PS00163">
    <property type="entry name" value="FUMARATE_LYASES"/>
    <property type="match status" value="1"/>
</dbReference>
<sequence length="460" mass="50481">MALWGGRFSLAADRRFKQFNDSLRFDYRLAEQDIIGSVAWSRALVTVGVLTVQEQQQLVQALTALLEEVRTDPRSILDSDAEDIHSWVEQQLIGRVGDLGKKLHTGRSRNDQVATDLKLWCKDQGEMLRQALIALQQVLTACARQNQDAVMPGYTHLQRAQPITFAHWCMAYVEMLARDESRLDDALRRLNTSPLGSGALAGTAYPIDRDRLADWLGFSAATRNSLDSVSDRDHVLELLSAAAIGMVHLSRFAEDLIFFNSGEAGFIELSERVTSGSSLMPQKKNPDALELIRGKCGRVQGALSGMLMTLKGLPLAYNKDMQEDKEGLFDALDTWLDCLQMATLALDGLAVKRPRCAEAAQQGYANATELADYLVAKGIPFREAHHIVGEAVVAALAQGKPLEALPLEMLQSFSPVIGADIYPLLALDSCLVKRSARGGVAPQQVAQAIDDAQRRLGNIL</sequence>
<organism>
    <name type="scientific">Edwardsiella ictaluri (strain 93-146)</name>
    <dbReference type="NCBI Taxonomy" id="634503"/>
    <lineage>
        <taxon>Bacteria</taxon>
        <taxon>Pseudomonadati</taxon>
        <taxon>Pseudomonadota</taxon>
        <taxon>Gammaproteobacteria</taxon>
        <taxon>Enterobacterales</taxon>
        <taxon>Hafniaceae</taxon>
        <taxon>Edwardsiella</taxon>
    </lineage>
</organism>
<feature type="chain" id="PRO_1000201697" description="Argininosuccinate lyase">
    <location>
        <begin position="1"/>
        <end position="460"/>
    </location>
</feature>
<protein>
    <recommendedName>
        <fullName evidence="1">Argininosuccinate lyase</fullName>
        <shortName evidence="1">ASAL</shortName>
        <ecNumber evidence="1">4.3.2.1</ecNumber>
    </recommendedName>
    <alternativeName>
        <fullName evidence="1">Arginosuccinase</fullName>
    </alternativeName>
</protein>
<name>ARLY_EDWI9</name>
<accession>C5BC57</accession>
<evidence type="ECO:0000255" key="1">
    <source>
        <dbReference type="HAMAP-Rule" id="MF_00006"/>
    </source>
</evidence>
<comment type="catalytic activity">
    <reaction evidence="1">
        <text>2-(N(omega)-L-arginino)succinate = fumarate + L-arginine</text>
        <dbReference type="Rhea" id="RHEA:24020"/>
        <dbReference type="ChEBI" id="CHEBI:29806"/>
        <dbReference type="ChEBI" id="CHEBI:32682"/>
        <dbReference type="ChEBI" id="CHEBI:57472"/>
        <dbReference type="EC" id="4.3.2.1"/>
    </reaction>
</comment>
<comment type="pathway">
    <text evidence="1">Amino-acid biosynthesis; L-arginine biosynthesis; L-arginine from L-ornithine and carbamoyl phosphate: step 3/3.</text>
</comment>
<comment type="subcellular location">
    <subcellularLocation>
        <location evidence="1">Cytoplasm</location>
    </subcellularLocation>
</comment>
<comment type="similarity">
    <text evidence="1">Belongs to the lyase 1 family. Argininosuccinate lyase subfamily.</text>
</comment>
<gene>
    <name evidence="1" type="primary">argH</name>
    <name type="ordered locus">NT01EI_3844</name>
</gene>